<sequence length="483" mass="55453">MKGLIARFIAGFALLLWAWDMVFPWQQLMQAEENRYNQIQQRKILRVGMVNHPLSYFIGAEGTAGIEYELAKSFANYLDVRLDIKTFDNSEQLFSALKDNKVDIAAAGLLYQPELSKQFQIGSAYYSASWQVVYKKGSNRPYKLSELEGDLIIPAGSAVLPILQRLKEDNPKLSWQTTNQFTQEELLLQVAEGKIPYTVGVSVDISAAQHIRPNIAVGFDLTDEAPVLWYLPNSSYSELQAAVLDFMNHANETGLISRIEEKYFNHLAHFDYVDIQSYLKAIKLVLPKYQSLFEKYCGDLEWQMLAAIAYQESHWDPNATSPTGVRGMMMLTRDTAERMKITDRTSAEQSIRAGSEYLHMLMRQIPETVPKEDRIWYGLAAYNMGLGHLLDVRRLTRQLGGNPDNWLDVKKNLPLLAEKRHYSGLKYGYARGFEAFQYVENIRRYYSSIINHQRVEEQQIQNNEEQPSVPQEISKESDSTLKE</sequence>
<accession>A3N214</accession>
<protein>
    <recommendedName>
        <fullName evidence="1">Membrane-bound lytic murein transglycosylase F</fullName>
        <ecNumber evidence="1">4.2.2.n1</ecNumber>
    </recommendedName>
    <alternativeName>
        <fullName evidence="1">Murein lyase F</fullName>
    </alternativeName>
</protein>
<dbReference type="EC" id="4.2.2.n1" evidence="1"/>
<dbReference type="EMBL" id="CP000569">
    <property type="protein sequence ID" value="ABN74450.1"/>
    <property type="status" value="ALT_INIT"/>
    <property type="molecule type" value="Genomic_DNA"/>
</dbReference>
<dbReference type="RefSeq" id="WP_009874919.1">
    <property type="nucleotide sequence ID" value="NC_009053.1"/>
</dbReference>
<dbReference type="SMR" id="A3N214"/>
<dbReference type="STRING" id="416269.APL_1366"/>
<dbReference type="CAZy" id="GH23">
    <property type="family name" value="Glycoside Hydrolase Family 23"/>
</dbReference>
<dbReference type="EnsemblBacteria" id="ABN74450">
    <property type="protein sequence ID" value="ABN74450"/>
    <property type="gene ID" value="APL_1366"/>
</dbReference>
<dbReference type="KEGG" id="apl:APL_1366"/>
<dbReference type="PATRIC" id="fig|416269.6.peg.1424"/>
<dbReference type="eggNOG" id="COG4623">
    <property type="taxonomic scope" value="Bacteria"/>
</dbReference>
<dbReference type="HOGENOM" id="CLU_027494_0_1_6"/>
<dbReference type="Proteomes" id="UP000001432">
    <property type="component" value="Chromosome"/>
</dbReference>
<dbReference type="GO" id="GO:0009279">
    <property type="term" value="C:cell outer membrane"/>
    <property type="evidence" value="ECO:0007669"/>
    <property type="project" value="UniProtKB-SubCell"/>
</dbReference>
<dbReference type="GO" id="GO:0008933">
    <property type="term" value="F:peptidoglycan lytic transglycosylase activity"/>
    <property type="evidence" value="ECO:0007669"/>
    <property type="project" value="UniProtKB-UniRule"/>
</dbReference>
<dbReference type="GO" id="GO:0016998">
    <property type="term" value="P:cell wall macromolecule catabolic process"/>
    <property type="evidence" value="ECO:0007669"/>
    <property type="project" value="UniProtKB-UniRule"/>
</dbReference>
<dbReference type="GO" id="GO:0071555">
    <property type="term" value="P:cell wall organization"/>
    <property type="evidence" value="ECO:0007669"/>
    <property type="project" value="UniProtKB-KW"/>
</dbReference>
<dbReference type="GO" id="GO:0009253">
    <property type="term" value="P:peptidoglycan catabolic process"/>
    <property type="evidence" value="ECO:0007669"/>
    <property type="project" value="TreeGrafter"/>
</dbReference>
<dbReference type="CDD" id="cd13403">
    <property type="entry name" value="MLTF-like"/>
    <property type="match status" value="1"/>
</dbReference>
<dbReference type="CDD" id="cd01009">
    <property type="entry name" value="PBP2_YfhD_N"/>
    <property type="match status" value="1"/>
</dbReference>
<dbReference type="Gene3D" id="1.10.530.10">
    <property type="match status" value="1"/>
</dbReference>
<dbReference type="Gene3D" id="3.40.190.10">
    <property type="entry name" value="Periplasmic binding protein-like II"/>
    <property type="match status" value="2"/>
</dbReference>
<dbReference type="HAMAP" id="MF_02016">
    <property type="entry name" value="MltF"/>
    <property type="match status" value="1"/>
</dbReference>
<dbReference type="InterPro" id="IPR023346">
    <property type="entry name" value="Lysozyme-like_dom_sf"/>
</dbReference>
<dbReference type="InterPro" id="IPR023703">
    <property type="entry name" value="MltF"/>
</dbReference>
<dbReference type="InterPro" id="IPR001638">
    <property type="entry name" value="Solute-binding_3/MltF_N"/>
</dbReference>
<dbReference type="InterPro" id="IPR000189">
    <property type="entry name" value="Transglyc_AS"/>
</dbReference>
<dbReference type="InterPro" id="IPR008258">
    <property type="entry name" value="Transglycosylase_SLT_dom_1"/>
</dbReference>
<dbReference type="NCBIfam" id="NF008112">
    <property type="entry name" value="PRK10859.1"/>
    <property type="match status" value="1"/>
</dbReference>
<dbReference type="PANTHER" id="PTHR35936">
    <property type="entry name" value="MEMBRANE-BOUND LYTIC MUREIN TRANSGLYCOSYLASE F"/>
    <property type="match status" value="1"/>
</dbReference>
<dbReference type="PANTHER" id="PTHR35936:SF32">
    <property type="entry name" value="MEMBRANE-BOUND LYTIC MUREIN TRANSGLYCOSYLASE F"/>
    <property type="match status" value="1"/>
</dbReference>
<dbReference type="Pfam" id="PF00497">
    <property type="entry name" value="SBP_bac_3"/>
    <property type="match status" value="1"/>
</dbReference>
<dbReference type="Pfam" id="PF01464">
    <property type="entry name" value="SLT"/>
    <property type="match status" value="1"/>
</dbReference>
<dbReference type="SMART" id="SM00062">
    <property type="entry name" value="PBPb"/>
    <property type="match status" value="1"/>
</dbReference>
<dbReference type="SUPFAM" id="SSF53955">
    <property type="entry name" value="Lysozyme-like"/>
    <property type="match status" value="1"/>
</dbReference>
<dbReference type="SUPFAM" id="SSF53850">
    <property type="entry name" value="Periplasmic binding protein-like II"/>
    <property type="match status" value="1"/>
</dbReference>
<dbReference type="PROSITE" id="PS00922">
    <property type="entry name" value="TRANSGLYCOSYLASE"/>
    <property type="match status" value="1"/>
</dbReference>
<proteinExistence type="inferred from homology"/>
<organism>
    <name type="scientific">Actinobacillus pleuropneumoniae serotype 5b (strain L20)</name>
    <dbReference type="NCBI Taxonomy" id="416269"/>
    <lineage>
        <taxon>Bacteria</taxon>
        <taxon>Pseudomonadati</taxon>
        <taxon>Pseudomonadota</taxon>
        <taxon>Gammaproteobacteria</taxon>
        <taxon>Pasteurellales</taxon>
        <taxon>Pasteurellaceae</taxon>
        <taxon>Actinobacillus</taxon>
    </lineage>
</organism>
<comment type="function">
    <text evidence="1">Murein-degrading enzyme that degrades murein glycan strands and insoluble, high-molecular weight murein sacculi, with the concomitant formation of a 1,6-anhydromuramoyl product. Lytic transglycosylases (LTs) play an integral role in the metabolism of the peptidoglycan (PG) sacculus. Their lytic action creates space within the PG sacculus to allow for its expansion as well as for the insertion of various structures such as secretion systems and flagella.</text>
</comment>
<comment type="catalytic activity">
    <reaction evidence="1">
        <text>Exolytic cleavage of the (1-&gt;4)-beta-glycosidic linkage between N-acetylmuramic acid (MurNAc) and N-acetylglucosamine (GlcNAc) residues in peptidoglycan, from either the reducing or the non-reducing ends of the peptidoglycan chains, with concomitant formation of a 1,6-anhydrobond in the MurNAc residue.</text>
        <dbReference type="EC" id="4.2.2.n1"/>
    </reaction>
</comment>
<comment type="subcellular location">
    <subcellularLocation>
        <location>Cell outer membrane</location>
        <topology>Peripheral membrane protein</topology>
    </subcellularLocation>
    <text evidence="1">Attached to the inner leaflet of the outer membrane.</text>
</comment>
<comment type="domain">
    <text evidence="1">The N-terminal domain does not have lytic activity and probably modulates enzymatic activity. The C-terminal domain is the catalytic active domain.</text>
</comment>
<comment type="similarity">
    <text evidence="1">In the N-terminal section; belongs to the bacterial solute-binding protein 3 family.</text>
</comment>
<comment type="similarity">
    <text evidence="1">In the C-terminal section; belongs to the transglycosylase Slt family.</text>
</comment>
<comment type="sequence caution" evidence="3">
    <conflict type="erroneous initiation">
        <sequence resource="EMBL-CDS" id="ABN74450"/>
    </conflict>
</comment>
<name>MLTF_ACTP2</name>
<keyword id="KW-0998">Cell outer membrane</keyword>
<keyword id="KW-0961">Cell wall biogenesis/degradation</keyword>
<keyword id="KW-0456">Lyase</keyword>
<keyword id="KW-0472">Membrane</keyword>
<keyword id="KW-1185">Reference proteome</keyword>
<keyword id="KW-0732">Signal</keyword>
<feature type="signal peptide" evidence="1">
    <location>
        <begin position="1"/>
        <end position="18"/>
    </location>
</feature>
<feature type="chain" id="PRO_0000353913" description="Membrane-bound lytic murein transglycosylase F">
    <location>
        <begin position="19"/>
        <end position="483"/>
    </location>
</feature>
<feature type="region of interest" description="Non-LT domain" evidence="1">
    <location>
        <begin position="19"/>
        <end position="267"/>
    </location>
</feature>
<feature type="region of interest" description="LT domain" evidence="1">
    <location>
        <begin position="269"/>
        <end position="483"/>
    </location>
</feature>
<feature type="region of interest" description="Disordered" evidence="2">
    <location>
        <begin position="458"/>
        <end position="483"/>
    </location>
</feature>
<feature type="compositionally biased region" description="Basic and acidic residues" evidence="2">
    <location>
        <begin position="473"/>
        <end position="483"/>
    </location>
</feature>
<feature type="active site" evidence="1">
    <location>
        <position position="312"/>
    </location>
</feature>
<reference key="1">
    <citation type="journal article" date="2008" name="J. Bacteriol.">
        <title>The complete genome sequence of Actinobacillus pleuropneumoniae L20 (serotype 5b).</title>
        <authorList>
            <person name="Foote S.J."/>
            <person name="Bosse J.T."/>
            <person name="Bouevitch A.B."/>
            <person name="Langford P.R."/>
            <person name="Young N.M."/>
            <person name="Nash J.H.E."/>
        </authorList>
    </citation>
    <scope>NUCLEOTIDE SEQUENCE [LARGE SCALE GENOMIC DNA]</scope>
    <source>
        <strain>L20</strain>
    </source>
</reference>
<evidence type="ECO:0000255" key="1">
    <source>
        <dbReference type="HAMAP-Rule" id="MF_02016"/>
    </source>
</evidence>
<evidence type="ECO:0000256" key="2">
    <source>
        <dbReference type="SAM" id="MobiDB-lite"/>
    </source>
</evidence>
<evidence type="ECO:0000305" key="3"/>
<gene>
    <name evidence="1" type="primary">mltF</name>
    <name type="ordered locus">APL_1366</name>
</gene>